<comment type="function">
    <text evidence="1">Catalyzes the formation of 6,7-dimethyl-8-ribityllumazine by condensation of 5-amino-6-(D-ribitylamino)uracil with 3,4-dihydroxy-2-butanone 4-phosphate. This is the penultimate step in the biosynthesis of riboflavin.</text>
</comment>
<comment type="catalytic activity">
    <reaction evidence="1">
        <text>(2S)-2-hydroxy-3-oxobutyl phosphate + 5-amino-6-(D-ribitylamino)uracil = 6,7-dimethyl-8-(1-D-ribityl)lumazine + phosphate + 2 H2O + H(+)</text>
        <dbReference type="Rhea" id="RHEA:26152"/>
        <dbReference type="ChEBI" id="CHEBI:15377"/>
        <dbReference type="ChEBI" id="CHEBI:15378"/>
        <dbReference type="ChEBI" id="CHEBI:15934"/>
        <dbReference type="ChEBI" id="CHEBI:43474"/>
        <dbReference type="ChEBI" id="CHEBI:58201"/>
        <dbReference type="ChEBI" id="CHEBI:58830"/>
        <dbReference type="EC" id="2.5.1.78"/>
    </reaction>
</comment>
<comment type="pathway">
    <text evidence="1">Cofactor biosynthesis; riboflavin biosynthesis; riboflavin from 2-hydroxy-3-oxobutyl phosphate and 5-amino-6-(D-ribitylamino)uracil: step 1/2.</text>
</comment>
<comment type="subunit">
    <text evidence="1">Forms an icosahedral capsid composed of 60 subunits, arranged as a dodecamer of pentamers.</text>
</comment>
<comment type="similarity">
    <text evidence="1">Belongs to the DMRL synthase family.</text>
</comment>
<accession>P61719</accession>
<gene>
    <name evidence="1" type="primary">ribH</name>
    <name type="ordered locus">BCE_4182</name>
</gene>
<dbReference type="EC" id="2.5.1.78" evidence="1"/>
<dbReference type="EMBL" id="AE017194">
    <property type="protein sequence ID" value="AAS43083.1"/>
    <property type="molecule type" value="Genomic_DNA"/>
</dbReference>
<dbReference type="SMR" id="P61719"/>
<dbReference type="KEGG" id="bca:BCE_4182"/>
<dbReference type="HOGENOM" id="CLU_089358_1_1_9"/>
<dbReference type="UniPathway" id="UPA00275">
    <property type="reaction ID" value="UER00404"/>
</dbReference>
<dbReference type="Proteomes" id="UP000002527">
    <property type="component" value="Chromosome"/>
</dbReference>
<dbReference type="GO" id="GO:0005829">
    <property type="term" value="C:cytosol"/>
    <property type="evidence" value="ECO:0007669"/>
    <property type="project" value="TreeGrafter"/>
</dbReference>
<dbReference type="GO" id="GO:0009349">
    <property type="term" value="C:riboflavin synthase complex"/>
    <property type="evidence" value="ECO:0007669"/>
    <property type="project" value="InterPro"/>
</dbReference>
<dbReference type="GO" id="GO:0000906">
    <property type="term" value="F:6,7-dimethyl-8-ribityllumazine synthase activity"/>
    <property type="evidence" value="ECO:0007669"/>
    <property type="project" value="UniProtKB-UniRule"/>
</dbReference>
<dbReference type="GO" id="GO:0009231">
    <property type="term" value="P:riboflavin biosynthetic process"/>
    <property type="evidence" value="ECO:0007669"/>
    <property type="project" value="UniProtKB-UniRule"/>
</dbReference>
<dbReference type="CDD" id="cd09209">
    <property type="entry name" value="Lumazine_synthase-I"/>
    <property type="match status" value="1"/>
</dbReference>
<dbReference type="FunFam" id="3.40.50.960:FF:000001">
    <property type="entry name" value="6,7-dimethyl-8-ribityllumazine synthase"/>
    <property type="match status" value="1"/>
</dbReference>
<dbReference type="Gene3D" id="3.40.50.960">
    <property type="entry name" value="Lumazine/riboflavin synthase"/>
    <property type="match status" value="1"/>
</dbReference>
<dbReference type="HAMAP" id="MF_00178">
    <property type="entry name" value="Lumazine_synth"/>
    <property type="match status" value="1"/>
</dbReference>
<dbReference type="InterPro" id="IPR034964">
    <property type="entry name" value="LS"/>
</dbReference>
<dbReference type="InterPro" id="IPR002180">
    <property type="entry name" value="LS/RS"/>
</dbReference>
<dbReference type="InterPro" id="IPR036467">
    <property type="entry name" value="LS/RS_sf"/>
</dbReference>
<dbReference type="NCBIfam" id="TIGR00114">
    <property type="entry name" value="lumazine-synth"/>
    <property type="match status" value="1"/>
</dbReference>
<dbReference type="NCBIfam" id="NF000812">
    <property type="entry name" value="PRK00061.1-4"/>
    <property type="match status" value="1"/>
</dbReference>
<dbReference type="PANTHER" id="PTHR21058:SF0">
    <property type="entry name" value="6,7-DIMETHYL-8-RIBITYLLUMAZINE SYNTHASE"/>
    <property type="match status" value="1"/>
</dbReference>
<dbReference type="PANTHER" id="PTHR21058">
    <property type="entry name" value="6,7-DIMETHYL-8-RIBITYLLUMAZINE SYNTHASE DMRL SYNTHASE LUMAZINE SYNTHASE"/>
    <property type="match status" value="1"/>
</dbReference>
<dbReference type="Pfam" id="PF00885">
    <property type="entry name" value="DMRL_synthase"/>
    <property type="match status" value="1"/>
</dbReference>
<dbReference type="SUPFAM" id="SSF52121">
    <property type="entry name" value="Lumazine synthase"/>
    <property type="match status" value="1"/>
</dbReference>
<sequence>MVFEGHLVGTGLKVGVVVGRFNEFITSKLLGGALDGLKRHGVEEADIDVAWVPGAFEIPLIAKKMANSGKYDAVITLGTVIRGATTHYDYVCNEVAKGVASLSLQTDIPVIFGVLTTETIEQAIERAGTKAGNKGYESAVAAIEMAHLSKQWA</sequence>
<reference key="1">
    <citation type="journal article" date="2004" name="Nucleic Acids Res.">
        <title>The genome sequence of Bacillus cereus ATCC 10987 reveals metabolic adaptations and a large plasmid related to Bacillus anthracis pXO1.</title>
        <authorList>
            <person name="Rasko D.A."/>
            <person name="Ravel J."/>
            <person name="Oekstad O.A."/>
            <person name="Helgason E."/>
            <person name="Cer R.Z."/>
            <person name="Jiang L."/>
            <person name="Shores K.A."/>
            <person name="Fouts D.E."/>
            <person name="Tourasse N.J."/>
            <person name="Angiuoli S.V."/>
            <person name="Kolonay J.F."/>
            <person name="Nelson W.C."/>
            <person name="Kolstoe A.-B."/>
            <person name="Fraser C.M."/>
            <person name="Read T.D."/>
        </authorList>
    </citation>
    <scope>NUCLEOTIDE SEQUENCE [LARGE SCALE GENOMIC DNA]</scope>
    <source>
        <strain>ATCC 10987 / NRS 248</strain>
    </source>
</reference>
<evidence type="ECO:0000255" key="1">
    <source>
        <dbReference type="HAMAP-Rule" id="MF_00178"/>
    </source>
</evidence>
<protein>
    <recommendedName>
        <fullName evidence="1">6,7-dimethyl-8-ribityllumazine synthase</fullName>
        <shortName evidence="1">DMRL synthase</shortName>
        <shortName evidence="1">LS</shortName>
        <shortName evidence="1">Lumazine synthase</shortName>
        <ecNumber evidence="1">2.5.1.78</ecNumber>
    </recommendedName>
</protein>
<feature type="chain" id="PRO_0000134712" description="6,7-dimethyl-8-ribityllumazine synthase">
    <location>
        <begin position="1"/>
        <end position="153"/>
    </location>
</feature>
<feature type="active site" description="Proton donor" evidence="1">
    <location>
        <position position="87"/>
    </location>
</feature>
<feature type="binding site" evidence="1">
    <location>
        <position position="21"/>
    </location>
    <ligand>
        <name>5-amino-6-(D-ribitylamino)uracil</name>
        <dbReference type="ChEBI" id="CHEBI:15934"/>
    </ligand>
</feature>
<feature type="binding site" evidence="1">
    <location>
        <begin position="55"/>
        <end position="57"/>
    </location>
    <ligand>
        <name>5-amino-6-(D-ribitylamino)uracil</name>
        <dbReference type="ChEBI" id="CHEBI:15934"/>
    </ligand>
</feature>
<feature type="binding site" evidence="1">
    <location>
        <begin position="79"/>
        <end position="81"/>
    </location>
    <ligand>
        <name>5-amino-6-(D-ribitylamino)uracil</name>
        <dbReference type="ChEBI" id="CHEBI:15934"/>
    </ligand>
</feature>
<feature type="binding site" evidence="1">
    <location>
        <begin position="84"/>
        <end position="85"/>
    </location>
    <ligand>
        <name>(2S)-2-hydroxy-3-oxobutyl phosphate</name>
        <dbReference type="ChEBI" id="CHEBI:58830"/>
    </ligand>
</feature>
<feature type="binding site" evidence="1">
    <location>
        <position position="112"/>
    </location>
    <ligand>
        <name>5-amino-6-(D-ribitylamino)uracil</name>
        <dbReference type="ChEBI" id="CHEBI:15934"/>
    </ligand>
</feature>
<feature type="binding site" evidence="1">
    <location>
        <position position="126"/>
    </location>
    <ligand>
        <name>(2S)-2-hydroxy-3-oxobutyl phosphate</name>
        <dbReference type="ChEBI" id="CHEBI:58830"/>
    </ligand>
</feature>
<organism>
    <name type="scientific">Bacillus cereus (strain ATCC 10987 / NRS 248)</name>
    <dbReference type="NCBI Taxonomy" id="222523"/>
    <lineage>
        <taxon>Bacteria</taxon>
        <taxon>Bacillati</taxon>
        <taxon>Bacillota</taxon>
        <taxon>Bacilli</taxon>
        <taxon>Bacillales</taxon>
        <taxon>Bacillaceae</taxon>
        <taxon>Bacillus</taxon>
        <taxon>Bacillus cereus group</taxon>
    </lineage>
</organism>
<keyword id="KW-0686">Riboflavin biosynthesis</keyword>
<keyword id="KW-0808">Transferase</keyword>
<name>RISB_BACC1</name>
<proteinExistence type="inferred from homology"/>